<feature type="chain" id="PRO_0000279962" description="Aliphatic sulfonates import ATP-binding protein SsuB">
    <location>
        <begin position="1"/>
        <end position="255"/>
    </location>
</feature>
<feature type="domain" description="ABC transporter" evidence="1">
    <location>
        <begin position="12"/>
        <end position="233"/>
    </location>
</feature>
<feature type="binding site" evidence="1">
    <location>
        <begin position="44"/>
        <end position="51"/>
    </location>
    <ligand>
        <name>ATP</name>
        <dbReference type="ChEBI" id="CHEBI:30616"/>
    </ligand>
</feature>
<name>SSUB_SHISS</name>
<comment type="function">
    <text evidence="1">Part of the ABC transporter complex SsuABC involved in aliphatic sulfonates import. Responsible for energy coupling to the transport system.</text>
</comment>
<comment type="catalytic activity">
    <reaction evidence="1">
        <text>ATP + H2O + aliphatic sulfonate-[sulfonate-binding protein]Side 1 = ADP + phosphate + aliphatic sulfonateSide 2 + [sulfonate-binding protein]Side 1.</text>
        <dbReference type="EC" id="7.6.2.14"/>
    </reaction>
</comment>
<comment type="subunit">
    <text evidence="1">The complex is composed of two ATP-binding proteins (SsuB), two transmembrane proteins (SsuC) and a solute-binding protein (SsuA).</text>
</comment>
<comment type="subcellular location">
    <subcellularLocation>
        <location evidence="1">Cell inner membrane</location>
        <topology evidence="1">Peripheral membrane protein</topology>
    </subcellularLocation>
</comment>
<comment type="similarity">
    <text evidence="1">Belongs to the ABC transporter superfamily. Aliphatic sulfonates importer (TC 3.A.1.17.2) family.</text>
</comment>
<reference key="1">
    <citation type="journal article" date="2005" name="Nucleic Acids Res.">
        <title>Genome dynamics and diversity of Shigella species, the etiologic agents of bacillary dysentery.</title>
        <authorList>
            <person name="Yang F."/>
            <person name="Yang J."/>
            <person name="Zhang X."/>
            <person name="Chen L."/>
            <person name="Jiang Y."/>
            <person name="Yan Y."/>
            <person name="Tang X."/>
            <person name="Wang J."/>
            <person name="Xiong Z."/>
            <person name="Dong J."/>
            <person name="Xue Y."/>
            <person name="Zhu Y."/>
            <person name="Xu X."/>
            <person name="Sun L."/>
            <person name="Chen S."/>
            <person name="Nie H."/>
            <person name="Peng J."/>
            <person name="Xu J."/>
            <person name="Wang Y."/>
            <person name="Yuan Z."/>
            <person name="Wen Y."/>
            <person name="Yao Z."/>
            <person name="Shen Y."/>
            <person name="Qiang B."/>
            <person name="Hou Y."/>
            <person name="Yu J."/>
            <person name="Jin Q."/>
        </authorList>
    </citation>
    <scope>NUCLEOTIDE SEQUENCE [LARGE SCALE GENOMIC DNA]</scope>
    <source>
        <strain>Ss046</strain>
    </source>
</reference>
<keyword id="KW-0067">ATP-binding</keyword>
<keyword id="KW-0997">Cell inner membrane</keyword>
<keyword id="KW-1003">Cell membrane</keyword>
<keyword id="KW-0472">Membrane</keyword>
<keyword id="KW-0547">Nucleotide-binding</keyword>
<keyword id="KW-1185">Reference proteome</keyword>
<keyword id="KW-1278">Translocase</keyword>
<keyword id="KW-0813">Transport</keyword>
<organism>
    <name type="scientific">Shigella sonnei (strain Ss046)</name>
    <dbReference type="NCBI Taxonomy" id="300269"/>
    <lineage>
        <taxon>Bacteria</taxon>
        <taxon>Pseudomonadati</taxon>
        <taxon>Pseudomonadota</taxon>
        <taxon>Gammaproteobacteria</taxon>
        <taxon>Enterobacterales</taxon>
        <taxon>Enterobacteriaceae</taxon>
        <taxon>Shigella</taxon>
    </lineage>
</organism>
<protein>
    <recommendedName>
        <fullName evidence="1">Aliphatic sulfonates import ATP-binding protein SsuB</fullName>
        <ecNumber evidence="1">7.6.2.14</ecNumber>
    </recommendedName>
</protein>
<accession>Q3Z3I7</accession>
<dbReference type="EC" id="7.6.2.14" evidence="1"/>
<dbReference type="EMBL" id="CP000038">
    <property type="protein sequence ID" value="AAZ87675.1"/>
    <property type="molecule type" value="Genomic_DNA"/>
</dbReference>
<dbReference type="RefSeq" id="WP_001090514.1">
    <property type="nucleotide sequence ID" value="NC_007384.1"/>
</dbReference>
<dbReference type="SMR" id="Q3Z3I7"/>
<dbReference type="GeneID" id="93776481"/>
<dbReference type="KEGG" id="ssn:SSON_0936"/>
<dbReference type="HOGENOM" id="CLU_000604_1_22_6"/>
<dbReference type="Proteomes" id="UP000002529">
    <property type="component" value="Chromosome"/>
</dbReference>
<dbReference type="GO" id="GO:0005886">
    <property type="term" value="C:plasma membrane"/>
    <property type="evidence" value="ECO:0007669"/>
    <property type="project" value="UniProtKB-SubCell"/>
</dbReference>
<dbReference type="GO" id="GO:0005524">
    <property type="term" value="F:ATP binding"/>
    <property type="evidence" value="ECO:0007669"/>
    <property type="project" value="UniProtKB-KW"/>
</dbReference>
<dbReference type="GO" id="GO:0016887">
    <property type="term" value="F:ATP hydrolysis activity"/>
    <property type="evidence" value="ECO:0007669"/>
    <property type="project" value="InterPro"/>
</dbReference>
<dbReference type="FunFam" id="3.40.50.300:FF:000653">
    <property type="entry name" value="Aliphatic sulfonates import ATP-binding protein SsuB"/>
    <property type="match status" value="1"/>
</dbReference>
<dbReference type="Gene3D" id="3.40.50.300">
    <property type="entry name" value="P-loop containing nucleotide triphosphate hydrolases"/>
    <property type="match status" value="1"/>
</dbReference>
<dbReference type="InterPro" id="IPR003593">
    <property type="entry name" value="AAA+_ATPase"/>
</dbReference>
<dbReference type="InterPro" id="IPR003439">
    <property type="entry name" value="ABC_transporter-like_ATP-bd"/>
</dbReference>
<dbReference type="InterPro" id="IPR017871">
    <property type="entry name" value="ABC_transporter-like_CS"/>
</dbReference>
<dbReference type="InterPro" id="IPR050166">
    <property type="entry name" value="ABC_transporter_ATP-bind"/>
</dbReference>
<dbReference type="InterPro" id="IPR027417">
    <property type="entry name" value="P-loop_NTPase"/>
</dbReference>
<dbReference type="NCBIfam" id="NF008420">
    <property type="entry name" value="PRK11247.1"/>
    <property type="match status" value="1"/>
</dbReference>
<dbReference type="PANTHER" id="PTHR42788:SF17">
    <property type="entry name" value="ALIPHATIC SULFONATES IMPORT ATP-BINDING PROTEIN SSUB"/>
    <property type="match status" value="1"/>
</dbReference>
<dbReference type="PANTHER" id="PTHR42788">
    <property type="entry name" value="TAURINE IMPORT ATP-BINDING PROTEIN-RELATED"/>
    <property type="match status" value="1"/>
</dbReference>
<dbReference type="Pfam" id="PF00005">
    <property type="entry name" value="ABC_tran"/>
    <property type="match status" value="1"/>
</dbReference>
<dbReference type="SMART" id="SM00382">
    <property type="entry name" value="AAA"/>
    <property type="match status" value="1"/>
</dbReference>
<dbReference type="SUPFAM" id="SSF52540">
    <property type="entry name" value="P-loop containing nucleoside triphosphate hydrolases"/>
    <property type="match status" value="1"/>
</dbReference>
<dbReference type="PROSITE" id="PS00211">
    <property type="entry name" value="ABC_TRANSPORTER_1"/>
    <property type="match status" value="1"/>
</dbReference>
<dbReference type="PROSITE" id="PS50893">
    <property type="entry name" value="ABC_TRANSPORTER_2"/>
    <property type="match status" value="1"/>
</dbReference>
<dbReference type="PROSITE" id="PS51291">
    <property type="entry name" value="SSUB"/>
    <property type="match status" value="1"/>
</dbReference>
<gene>
    <name evidence="1" type="primary">ssuB</name>
    <name type="ordered locus">SSON_0936</name>
</gene>
<proteinExistence type="inferred from homology"/>
<sequence length="255" mass="27794">MNTARLNQGTPLLLNAVSKHYAENIVLNQLDLHIPAGQFVAVVGRSGGGKSTLLRLLAGLETPTAGDVLAGTTPLAEIQEDTRMMFQDARLLPWKSVIDNVGLGLKGQWRDAARRALAAVGLENRAGEWPAALSGGQKQRVALARALIHRPGLLLLDEPLGALDALTRLEMQDLIVSLWQQHGFTVLLVTHDVSEAVAMADRVLLIEEGKIGLDLTVDIPRPRRLGSVRLAELEAEVLQRVMRRGHSEQLIRRHG</sequence>
<evidence type="ECO:0000255" key="1">
    <source>
        <dbReference type="HAMAP-Rule" id="MF_01724"/>
    </source>
</evidence>